<name>ILVD_SULDN</name>
<proteinExistence type="inferred from homology"/>
<organism>
    <name type="scientific">Sulfurimonas denitrificans (strain ATCC 33889 / DSM 1251)</name>
    <name type="common">Thiomicrospira denitrificans (strain ATCC 33889 / DSM 1251)</name>
    <dbReference type="NCBI Taxonomy" id="326298"/>
    <lineage>
        <taxon>Bacteria</taxon>
        <taxon>Pseudomonadati</taxon>
        <taxon>Campylobacterota</taxon>
        <taxon>Epsilonproteobacteria</taxon>
        <taxon>Campylobacterales</taxon>
        <taxon>Sulfurimonadaceae</taxon>
        <taxon>Sulfurimonas</taxon>
    </lineage>
</organism>
<protein>
    <recommendedName>
        <fullName evidence="1">Dihydroxy-acid dehydratase</fullName>
        <shortName evidence="1">DAD</shortName>
        <ecNumber evidence="1">4.2.1.9</ecNumber>
    </recommendedName>
</protein>
<gene>
    <name evidence="1" type="primary">ilvD</name>
    <name type="ordered locus">Suden_0065</name>
</gene>
<keyword id="KW-0001">2Fe-2S</keyword>
<keyword id="KW-0028">Amino-acid biosynthesis</keyword>
<keyword id="KW-0100">Branched-chain amino acid biosynthesis</keyword>
<keyword id="KW-0408">Iron</keyword>
<keyword id="KW-0411">Iron-sulfur</keyword>
<keyword id="KW-0456">Lyase</keyword>
<keyword id="KW-0460">Magnesium</keyword>
<keyword id="KW-0479">Metal-binding</keyword>
<keyword id="KW-1185">Reference proteome</keyword>
<sequence length="561" mass="59986">MRSDTIKKGFDKAPHRSLLRATGLRDEDFDKPFIGIANSYIDIIPGHFFLHEYGEIVKAAIREAGGVPFVFNTIGVDDGIAMGHDGMLYSLPSREIIADSIETVMNAHKLDALICIPNCDKIVPGMIMGALRVNVPTVFVSGGPMAAGHKKDGTPIDLATAFEAVGEHAEGKITDEELYDIECNACPSGGSCSGMFTANSMNTLCEAMGIALPGNGTVLAMTPRRIEMVKAAAKRIVEMAKADDSKYNLKNVLNEKAVHNAFVVDMAMGGSSNTVLHMLAIAREAGVDFPIEKINEIADNVAHIAKISPSLTTVHMDDIDKAGGVNAVMKEISRRGGLLYLENPTVTGETLGERIADAKILNEEIIHRNENAYSQVGGLSILFGNLATEGAVVKTAGIELNMRQFKGTAICFNSQPEAITGIMKHKVKPGNVVVIRYEGPKGGPGMQEMLAPTALIQGMGLGDSVALITDGRFSGATKGASIGHVSPEAAEGGLIAFIEDGDEIELDTDKHLLRLNVSDDVIAARKANYKPYKNEVKSKWLKRYQLLVSNASNGAVLKTEL</sequence>
<reference key="1">
    <citation type="journal article" date="2008" name="Appl. Environ. Microbiol.">
        <title>Genome of the epsilonproteobacterial chemolithoautotroph Sulfurimonas denitrificans.</title>
        <authorList>
            <person name="Sievert S.M."/>
            <person name="Scott K.M."/>
            <person name="Klotz M.G."/>
            <person name="Chain P.S.G."/>
            <person name="Hauser L.J."/>
            <person name="Hemp J."/>
            <person name="Huegler M."/>
            <person name="Land M."/>
            <person name="Lapidus A."/>
            <person name="Larimer F.W."/>
            <person name="Lucas S."/>
            <person name="Malfatti S.A."/>
            <person name="Meyer F."/>
            <person name="Paulsen I.T."/>
            <person name="Ren Q."/>
            <person name="Simon J."/>
            <person name="Bailey K."/>
            <person name="Diaz E."/>
            <person name="Fitzpatrick K.A."/>
            <person name="Glover B."/>
            <person name="Gwatney N."/>
            <person name="Korajkic A."/>
            <person name="Long A."/>
            <person name="Mobberley J.M."/>
            <person name="Pantry S.N."/>
            <person name="Pazder G."/>
            <person name="Peterson S."/>
            <person name="Quintanilla J.D."/>
            <person name="Sprinkle R."/>
            <person name="Stephens J."/>
            <person name="Thomas P."/>
            <person name="Vaughn R."/>
            <person name="Weber M.J."/>
            <person name="Wooten L.L."/>
        </authorList>
    </citation>
    <scope>NUCLEOTIDE SEQUENCE [LARGE SCALE GENOMIC DNA]</scope>
    <source>
        <strain>ATCC 33889 / DSM 1251</strain>
    </source>
</reference>
<dbReference type="EC" id="4.2.1.9" evidence="1"/>
<dbReference type="EMBL" id="CP000153">
    <property type="protein sequence ID" value="ABB43346.1"/>
    <property type="molecule type" value="Genomic_DNA"/>
</dbReference>
<dbReference type="RefSeq" id="WP_011371701.1">
    <property type="nucleotide sequence ID" value="NC_007575.1"/>
</dbReference>
<dbReference type="SMR" id="Q30UI5"/>
<dbReference type="STRING" id="326298.Suden_0065"/>
<dbReference type="KEGG" id="tdn:Suden_0065"/>
<dbReference type="eggNOG" id="COG0129">
    <property type="taxonomic scope" value="Bacteria"/>
</dbReference>
<dbReference type="HOGENOM" id="CLU_014271_4_2_7"/>
<dbReference type="OrthoDB" id="9807077at2"/>
<dbReference type="UniPathway" id="UPA00047">
    <property type="reaction ID" value="UER00057"/>
</dbReference>
<dbReference type="UniPathway" id="UPA00049">
    <property type="reaction ID" value="UER00061"/>
</dbReference>
<dbReference type="Proteomes" id="UP000002714">
    <property type="component" value="Chromosome"/>
</dbReference>
<dbReference type="GO" id="GO:0005829">
    <property type="term" value="C:cytosol"/>
    <property type="evidence" value="ECO:0007669"/>
    <property type="project" value="TreeGrafter"/>
</dbReference>
<dbReference type="GO" id="GO:0051537">
    <property type="term" value="F:2 iron, 2 sulfur cluster binding"/>
    <property type="evidence" value="ECO:0007669"/>
    <property type="project" value="UniProtKB-UniRule"/>
</dbReference>
<dbReference type="GO" id="GO:0004160">
    <property type="term" value="F:dihydroxy-acid dehydratase activity"/>
    <property type="evidence" value="ECO:0007669"/>
    <property type="project" value="UniProtKB-UniRule"/>
</dbReference>
<dbReference type="GO" id="GO:0000287">
    <property type="term" value="F:magnesium ion binding"/>
    <property type="evidence" value="ECO:0007669"/>
    <property type="project" value="UniProtKB-UniRule"/>
</dbReference>
<dbReference type="GO" id="GO:0009097">
    <property type="term" value="P:isoleucine biosynthetic process"/>
    <property type="evidence" value="ECO:0007669"/>
    <property type="project" value="UniProtKB-UniRule"/>
</dbReference>
<dbReference type="GO" id="GO:0009099">
    <property type="term" value="P:L-valine biosynthetic process"/>
    <property type="evidence" value="ECO:0007669"/>
    <property type="project" value="UniProtKB-UniRule"/>
</dbReference>
<dbReference type="FunFam" id="3.50.30.80:FF:000001">
    <property type="entry name" value="Dihydroxy-acid dehydratase"/>
    <property type="match status" value="1"/>
</dbReference>
<dbReference type="Gene3D" id="3.50.30.80">
    <property type="entry name" value="IlvD/EDD C-terminal domain-like"/>
    <property type="match status" value="1"/>
</dbReference>
<dbReference type="HAMAP" id="MF_00012">
    <property type="entry name" value="IlvD"/>
    <property type="match status" value="1"/>
</dbReference>
<dbReference type="InterPro" id="IPR042096">
    <property type="entry name" value="Dihydro-acid_dehy_C"/>
</dbReference>
<dbReference type="InterPro" id="IPR004404">
    <property type="entry name" value="DihydroxyA_deHydtase"/>
</dbReference>
<dbReference type="InterPro" id="IPR020558">
    <property type="entry name" value="DiOHA_6PGluconate_deHydtase_CS"/>
</dbReference>
<dbReference type="InterPro" id="IPR056740">
    <property type="entry name" value="ILV_EDD_C"/>
</dbReference>
<dbReference type="InterPro" id="IPR000581">
    <property type="entry name" value="ILV_EDD_N"/>
</dbReference>
<dbReference type="InterPro" id="IPR037237">
    <property type="entry name" value="IlvD/EDD_N"/>
</dbReference>
<dbReference type="NCBIfam" id="TIGR00110">
    <property type="entry name" value="ilvD"/>
    <property type="match status" value="1"/>
</dbReference>
<dbReference type="NCBIfam" id="NF002068">
    <property type="entry name" value="PRK00911.1"/>
    <property type="match status" value="1"/>
</dbReference>
<dbReference type="PANTHER" id="PTHR43661">
    <property type="entry name" value="D-XYLONATE DEHYDRATASE"/>
    <property type="match status" value="1"/>
</dbReference>
<dbReference type="PANTHER" id="PTHR43661:SF3">
    <property type="entry name" value="D-XYLONATE DEHYDRATASE YAGF-RELATED"/>
    <property type="match status" value="1"/>
</dbReference>
<dbReference type="Pfam" id="PF24877">
    <property type="entry name" value="ILV_EDD_C"/>
    <property type="match status" value="1"/>
</dbReference>
<dbReference type="Pfam" id="PF00920">
    <property type="entry name" value="ILVD_EDD_N"/>
    <property type="match status" value="1"/>
</dbReference>
<dbReference type="SUPFAM" id="SSF143975">
    <property type="entry name" value="IlvD/EDD N-terminal domain-like"/>
    <property type="match status" value="1"/>
</dbReference>
<dbReference type="SUPFAM" id="SSF52016">
    <property type="entry name" value="LeuD/IlvD-like"/>
    <property type="match status" value="1"/>
</dbReference>
<dbReference type="PROSITE" id="PS00886">
    <property type="entry name" value="ILVD_EDD_1"/>
    <property type="match status" value="1"/>
</dbReference>
<dbReference type="PROSITE" id="PS00887">
    <property type="entry name" value="ILVD_EDD_2"/>
    <property type="match status" value="1"/>
</dbReference>
<accession>Q30UI5</accession>
<feature type="chain" id="PRO_1000001080" description="Dihydroxy-acid dehydratase">
    <location>
        <begin position="1"/>
        <end position="561"/>
    </location>
</feature>
<feature type="active site" description="Proton acceptor" evidence="1">
    <location>
        <position position="474"/>
    </location>
</feature>
<feature type="binding site" evidence="1">
    <location>
        <position position="78"/>
    </location>
    <ligand>
        <name>Mg(2+)</name>
        <dbReference type="ChEBI" id="CHEBI:18420"/>
    </ligand>
</feature>
<feature type="binding site" evidence="1">
    <location>
        <position position="119"/>
    </location>
    <ligand>
        <name>[2Fe-2S] cluster</name>
        <dbReference type="ChEBI" id="CHEBI:190135"/>
    </ligand>
</feature>
<feature type="binding site" evidence="1">
    <location>
        <position position="120"/>
    </location>
    <ligand>
        <name>Mg(2+)</name>
        <dbReference type="ChEBI" id="CHEBI:18420"/>
    </ligand>
</feature>
<feature type="binding site" description="via carbamate group" evidence="1">
    <location>
        <position position="121"/>
    </location>
    <ligand>
        <name>Mg(2+)</name>
        <dbReference type="ChEBI" id="CHEBI:18420"/>
    </ligand>
</feature>
<feature type="binding site" evidence="1">
    <location>
        <position position="192"/>
    </location>
    <ligand>
        <name>[2Fe-2S] cluster</name>
        <dbReference type="ChEBI" id="CHEBI:190135"/>
    </ligand>
</feature>
<feature type="binding site" evidence="1">
    <location>
        <position position="448"/>
    </location>
    <ligand>
        <name>Mg(2+)</name>
        <dbReference type="ChEBI" id="CHEBI:18420"/>
    </ligand>
</feature>
<feature type="modified residue" description="N6-carboxylysine" evidence="1">
    <location>
        <position position="121"/>
    </location>
</feature>
<evidence type="ECO:0000255" key="1">
    <source>
        <dbReference type="HAMAP-Rule" id="MF_00012"/>
    </source>
</evidence>
<comment type="function">
    <text evidence="1">Functions in the biosynthesis of branched-chain amino acids. Catalyzes the dehydration of (2R,3R)-2,3-dihydroxy-3-methylpentanoate (2,3-dihydroxy-3-methylvalerate) into 2-oxo-3-methylpentanoate (2-oxo-3-methylvalerate) and of (2R)-2,3-dihydroxy-3-methylbutanoate (2,3-dihydroxyisovalerate) into 2-oxo-3-methylbutanoate (2-oxoisovalerate), the penultimate precursor to L-isoleucine and L-valine, respectively.</text>
</comment>
<comment type="catalytic activity">
    <reaction evidence="1">
        <text>(2R)-2,3-dihydroxy-3-methylbutanoate = 3-methyl-2-oxobutanoate + H2O</text>
        <dbReference type="Rhea" id="RHEA:24809"/>
        <dbReference type="ChEBI" id="CHEBI:11851"/>
        <dbReference type="ChEBI" id="CHEBI:15377"/>
        <dbReference type="ChEBI" id="CHEBI:49072"/>
        <dbReference type="EC" id="4.2.1.9"/>
    </reaction>
    <physiologicalReaction direction="left-to-right" evidence="1">
        <dbReference type="Rhea" id="RHEA:24810"/>
    </physiologicalReaction>
</comment>
<comment type="catalytic activity">
    <reaction evidence="1">
        <text>(2R,3R)-2,3-dihydroxy-3-methylpentanoate = (S)-3-methyl-2-oxopentanoate + H2O</text>
        <dbReference type="Rhea" id="RHEA:27694"/>
        <dbReference type="ChEBI" id="CHEBI:15377"/>
        <dbReference type="ChEBI" id="CHEBI:35146"/>
        <dbReference type="ChEBI" id="CHEBI:49258"/>
        <dbReference type="EC" id="4.2.1.9"/>
    </reaction>
    <physiologicalReaction direction="left-to-right" evidence="1">
        <dbReference type="Rhea" id="RHEA:27695"/>
    </physiologicalReaction>
</comment>
<comment type="cofactor">
    <cofactor evidence="1">
        <name>[2Fe-2S] cluster</name>
        <dbReference type="ChEBI" id="CHEBI:190135"/>
    </cofactor>
    <text evidence="1">Binds 1 [2Fe-2S] cluster per subunit. This cluster acts as a Lewis acid cofactor.</text>
</comment>
<comment type="cofactor">
    <cofactor evidence="1">
        <name>Mg(2+)</name>
        <dbReference type="ChEBI" id="CHEBI:18420"/>
    </cofactor>
</comment>
<comment type="pathway">
    <text evidence="1">Amino-acid biosynthesis; L-isoleucine biosynthesis; L-isoleucine from 2-oxobutanoate: step 3/4.</text>
</comment>
<comment type="pathway">
    <text evidence="1">Amino-acid biosynthesis; L-valine biosynthesis; L-valine from pyruvate: step 3/4.</text>
</comment>
<comment type="subunit">
    <text evidence="1">Homodimer.</text>
</comment>
<comment type="similarity">
    <text evidence="1">Belongs to the IlvD/Edd family.</text>
</comment>